<keyword id="KW-0037">Angiogenesis</keyword>
<keyword id="KW-0165">Cleavage on pair of basic residues</keyword>
<keyword id="KW-0217">Developmental protein</keyword>
<keyword id="KW-0903">Direct protein sequencing</keyword>
<keyword id="KW-0306">Gastrulation</keyword>
<keyword id="KW-0372">Hormone</keyword>
<keyword id="KW-0873">Pyrrolidone carboxylic acid</keyword>
<keyword id="KW-1185">Reference proteome</keyword>
<keyword id="KW-0964">Secreted</keyword>
<keyword id="KW-0732">Signal</keyword>
<reference key="1">
    <citation type="journal article" date="1998" name="Biochem. Biophys. Res. Commun.">
        <title>Isolation and characterization of a novel endogenous peptide ligand for the human APJ receptor.</title>
        <authorList>
            <person name="Tatemoto K."/>
            <person name="Hosoya M."/>
            <person name="Habata Y."/>
            <person name="Fujii R."/>
            <person name="Kakegawa T."/>
            <person name="Zou M.-X."/>
            <person name="Kawamata Y."/>
            <person name="Fukusumi S."/>
            <person name="Hinuma S."/>
            <person name="Kitada C."/>
            <person name="Kurokawa T."/>
            <person name="Onda H."/>
            <person name="Fujino M."/>
        </authorList>
    </citation>
    <scope>NUCLEOTIDE SEQUENCE [MRNA]</scope>
    <scope>PROTEIN SEQUENCE OF 42-58</scope>
    <scope>PYROGLUTAMATE FORMATION AT GLN-65</scope>
    <scope>FUNCTION</scope>
    <scope>SUBCELLULAR LOCATION</scope>
    <scope>PROTEOLYTIC PROCESSING</scope>
    <source>
        <tissue>Hypothalamus</tissue>
    </source>
</reference>
<reference key="2">
    <citation type="journal article" date="1999" name="Biochim. Biophys. Acta">
        <title>Apelin, the natural ligand of the orphan receptor APJ, is abundantly secreted in the colostrum.</title>
        <authorList>
            <person name="Habata Y."/>
            <person name="Fujii R."/>
            <person name="Hosoya M."/>
            <person name="Fukusumi S."/>
            <person name="Kawamata Y."/>
            <person name="Hinuma S."/>
            <person name="Kitada C."/>
            <person name="Nishizawa N."/>
            <person name="Murosaki S."/>
            <person name="Kurokawa T."/>
            <person name="Onda H."/>
            <person name="Tatemoto K."/>
            <person name="Fujino M."/>
        </authorList>
    </citation>
    <scope>NUCLEOTIDE SEQUENCE [MRNA]</scope>
    <scope>SUBCELLULAR LOCATION</scope>
    <source>
        <tissue>Brain</tissue>
    </source>
</reference>
<gene>
    <name type="primary">APLN</name>
    <name type="synonym">APEL</name>
</gene>
<accession>Q9TUI9</accession>
<evidence type="ECO:0000250" key="1">
    <source>
        <dbReference type="UniProtKB" id="Q4TTN8"/>
    </source>
</evidence>
<evidence type="ECO:0000250" key="2">
    <source>
        <dbReference type="UniProtKB" id="Q9R0R3"/>
    </source>
</evidence>
<evidence type="ECO:0000250" key="3">
    <source>
        <dbReference type="UniProtKB" id="Q9R0R4"/>
    </source>
</evidence>
<evidence type="ECO:0000250" key="4">
    <source>
        <dbReference type="UniProtKB" id="Q9ULZ1"/>
    </source>
</evidence>
<evidence type="ECO:0000255" key="5"/>
<evidence type="ECO:0000256" key="6">
    <source>
        <dbReference type="SAM" id="MobiDB-lite"/>
    </source>
</evidence>
<evidence type="ECO:0000269" key="7">
    <source>
    </source>
</evidence>
<evidence type="ECO:0000269" key="8">
    <source>
    </source>
</evidence>
<evidence type="ECO:0000305" key="9"/>
<organism>
    <name type="scientific">Bos taurus</name>
    <name type="common">Bovine</name>
    <dbReference type="NCBI Taxonomy" id="9913"/>
    <lineage>
        <taxon>Eukaryota</taxon>
        <taxon>Metazoa</taxon>
        <taxon>Chordata</taxon>
        <taxon>Craniata</taxon>
        <taxon>Vertebrata</taxon>
        <taxon>Euteleostomi</taxon>
        <taxon>Mammalia</taxon>
        <taxon>Eutheria</taxon>
        <taxon>Laurasiatheria</taxon>
        <taxon>Artiodactyla</taxon>
        <taxon>Ruminantia</taxon>
        <taxon>Pecora</taxon>
        <taxon>Bovidae</taxon>
        <taxon>Bovinae</taxon>
        <taxon>Bos</taxon>
    </lineage>
</organism>
<protein>
    <recommendedName>
        <fullName>Apelin</fullName>
    </recommendedName>
    <alternativeName>
        <fullName>APJ endogenous ligand</fullName>
    </alternativeName>
    <component>
        <recommendedName>
            <fullName>Apelin-36</fullName>
        </recommendedName>
    </component>
    <component>
        <recommendedName>
            <fullName>Apelin-31</fullName>
        </recommendedName>
    </component>
    <component>
        <recommendedName>
            <fullName>Apelin-28</fullName>
        </recommendedName>
    </component>
    <component>
        <recommendedName>
            <fullName>Apelin-13</fullName>
        </recommendedName>
    </component>
</protein>
<feature type="signal peptide" evidence="5">
    <location>
        <begin position="1"/>
        <end position="22"/>
    </location>
</feature>
<feature type="propeptide" id="PRO_0000001754" evidence="8">
    <location>
        <begin position="23"/>
        <end position="41"/>
    </location>
</feature>
<feature type="peptide" id="PRO_0000001755" description="Apelin-36">
    <location>
        <begin position="42"/>
        <end position="77"/>
    </location>
</feature>
<feature type="peptide" id="PRO_0000001756" description="Apelin-31">
    <location>
        <begin position="47"/>
        <end position="77"/>
    </location>
</feature>
<feature type="peptide" id="PRO_0000001757" description="Apelin-28">
    <location>
        <begin position="50"/>
        <end position="77"/>
    </location>
</feature>
<feature type="peptide" id="PRO_0000001758" description="Apelin-13">
    <location>
        <begin position="65"/>
        <end position="77"/>
    </location>
</feature>
<feature type="region of interest" description="Disordered" evidence="6">
    <location>
        <begin position="43"/>
        <end position="77"/>
    </location>
</feature>
<feature type="compositionally biased region" description="Basic residues" evidence="6">
    <location>
        <begin position="58"/>
        <end position="71"/>
    </location>
</feature>
<feature type="site" description="Important for the balance between G(i) and beta-arrestin pathways induced by apelin-13-APLNR system" evidence="4">
    <location>
        <position position="75"/>
    </location>
</feature>
<feature type="site" description="Important for the balance between G(i) and beta-arrestin pathways induced by apelin-13-APLNR system" evidence="4">
    <location>
        <position position="77"/>
    </location>
</feature>
<feature type="modified residue" description="Pyrrolidone carboxylic acid" evidence="8">
    <location>
        <position position="65"/>
    </location>
</feature>
<dbReference type="EMBL" id="AB023492">
    <property type="protein sequence ID" value="BAA84974.1"/>
    <property type="molecule type" value="mRNA"/>
</dbReference>
<dbReference type="RefSeq" id="NP_776928.1">
    <property type="nucleotide sequence ID" value="NM_174503.1"/>
</dbReference>
<dbReference type="RefSeq" id="XP_005227542.1">
    <property type="nucleotide sequence ID" value="XM_005227485.5"/>
</dbReference>
<dbReference type="RefSeq" id="XP_010819696.1">
    <property type="nucleotide sequence ID" value="XM_010821394.4"/>
</dbReference>
<dbReference type="BMRB" id="Q9TUI9"/>
<dbReference type="FunCoup" id="Q9TUI9">
    <property type="interactions" value="68"/>
</dbReference>
<dbReference type="STRING" id="9913.ENSBTAP00000026630"/>
<dbReference type="PaxDb" id="9913-ENSBTAP00000026630"/>
<dbReference type="Ensembl" id="ENSBTAT00000026630.3">
    <property type="protein sequence ID" value="ENSBTAP00000026630.3"/>
    <property type="gene ID" value="ENSBTAG00000019993.4"/>
</dbReference>
<dbReference type="GeneID" id="282143"/>
<dbReference type="KEGG" id="bta:282143"/>
<dbReference type="CTD" id="8862"/>
<dbReference type="VGNC" id="VGNC:26017">
    <property type="gene designation" value="APLN"/>
</dbReference>
<dbReference type="eggNOG" id="ENOG502S9TY">
    <property type="taxonomic scope" value="Eukaryota"/>
</dbReference>
<dbReference type="GeneTree" id="ENSGT00390000014020"/>
<dbReference type="HOGENOM" id="CLU_198461_0_0_1"/>
<dbReference type="InParanoid" id="Q9TUI9"/>
<dbReference type="OrthoDB" id="9892041at2759"/>
<dbReference type="TreeFam" id="TF339660"/>
<dbReference type="Proteomes" id="UP000009136">
    <property type="component" value="Chromosome X"/>
</dbReference>
<dbReference type="GO" id="GO:0005576">
    <property type="term" value="C:extracellular region"/>
    <property type="evidence" value="ECO:0000250"/>
    <property type="project" value="UniProtKB"/>
</dbReference>
<dbReference type="GO" id="GO:0005615">
    <property type="term" value="C:extracellular space"/>
    <property type="evidence" value="ECO:0000250"/>
    <property type="project" value="UniProtKB"/>
</dbReference>
<dbReference type="GO" id="GO:0031704">
    <property type="term" value="F:apelin receptor binding"/>
    <property type="evidence" value="ECO:0000250"/>
    <property type="project" value="UniProtKB"/>
</dbReference>
<dbReference type="GO" id="GO:0005179">
    <property type="term" value="F:hormone activity"/>
    <property type="evidence" value="ECO:0000250"/>
    <property type="project" value="UniProtKB"/>
</dbReference>
<dbReference type="GO" id="GO:0001525">
    <property type="term" value="P:angiogenesis"/>
    <property type="evidence" value="ECO:0007669"/>
    <property type="project" value="UniProtKB-KW"/>
</dbReference>
<dbReference type="GO" id="GO:0060183">
    <property type="term" value="P:apelin receptor signaling pathway"/>
    <property type="evidence" value="ECO:0000250"/>
    <property type="project" value="UniProtKB"/>
</dbReference>
<dbReference type="GO" id="GO:0060976">
    <property type="term" value="P:coronary vasculature development"/>
    <property type="evidence" value="ECO:0000250"/>
    <property type="project" value="UniProtKB"/>
</dbReference>
<dbReference type="GO" id="GO:0042756">
    <property type="term" value="P:drinking behavior"/>
    <property type="evidence" value="ECO:0000250"/>
    <property type="project" value="UniProtKB"/>
</dbReference>
<dbReference type="GO" id="GO:0007369">
    <property type="term" value="P:gastrulation"/>
    <property type="evidence" value="ECO:0007669"/>
    <property type="project" value="UniProtKB-KW"/>
</dbReference>
<dbReference type="GO" id="GO:0045776">
    <property type="term" value="P:negative regulation of blood pressure"/>
    <property type="evidence" value="ECO:0000250"/>
    <property type="project" value="UniProtKB"/>
</dbReference>
<dbReference type="GO" id="GO:0040037">
    <property type="term" value="P:negative regulation of fibroblast growth factor receptor signaling pathway"/>
    <property type="evidence" value="ECO:0007669"/>
    <property type="project" value="Ensembl"/>
</dbReference>
<dbReference type="GO" id="GO:0010629">
    <property type="term" value="P:negative regulation of gene expression"/>
    <property type="evidence" value="ECO:0007669"/>
    <property type="project" value="Ensembl"/>
</dbReference>
<dbReference type="GO" id="GO:1904706">
    <property type="term" value="P:negative regulation of vascular associated smooth muscle cell proliferation"/>
    <property type="evidence" value="ECO:0007669"/>
    <property type="project" value="Ensembl"/>
</dbReference>
<dbReference type="GO" id="GO:1904022">
    <property type="term" value="P:positive regulation of G protein-coupled receptor internalization"/>
    <property type="evidence" value="ECO:0000250"/>
    <property type="project" value="UniProtKB"/>
</dbReference>
<dbReference type="GO" id="GO:0045823">
    <property type="term" value="P:positive regulation of heart contraction"/>
    <property type="evidence" value="ECO:0000250"/>
    <property type="project" value="UniProtKB"/>
</dbReference>
<dbReference type="GO" id="GO:1902895">
    <property type="term" value="P:positive regulation of miRNA transcription"/>
    <property type="evidence" value="ECO:0007669"/>
    <property type="project" value="Ensembl"/>
</dbReference>
<dbReference type="GO" id="GO:1905564">
    <property type="term" value="P:positive regulation of vascular endothelial cell proliferation"/>
    <property type="evidence" value="ECO:0007669"/>
    <property type="project" value="Ensembl"/>
</dbReference>
<dbReference type="InterPro" id="IPR026155">
    <property type="entry name" value="Apelin"/>
</dbReference>
<dbReference type="PANTHER" id="PTHR15953">
    <property type="entry name" value="APELIN"/>
    <property type="match status" value="1"/>
</dbReference>
<dbReference type="PANTHER" id="PTHR15953:SF0">
    <property type="entry name" value="APELIN"/>
    <property type="match status" value="1"/>
</dbReference>
<dbReference type="Pfam" id="PF15360">
    <property type="entry name" value="Apelin"/>
    <property type="match status" value="1"/>
</dbReference>
<comment type="function">
    <text evidence="1 2 3 4 8">Peptide hormone that functions as endogenous ligand for the G-protein-coupled apelin receptor (APLNR/APJ), that plays a role in cadiovascular homeostasis (PubMed:9792798). Functions as a balanced agonist activating both G(i) protein pathway and beta-arrestin pathway of APLNR. Downstream G proteins activation, apelin can inhibit cAMP production and activate key intracellular effectors such as ERKs. On the other hand, APLNR activation induces beta-arrestin recruitment to the membrane leading to desensitization and internalization of the receptor. Apelin blunts cardiac hypertrophic induction from APLNR on response to pathological stimuli, but also induces myocardial hypertrophy under normal conditions (By similarity). Apelin-36 dissociates more hardly than (pyroglu)apelin-13 from APLNR (By similarity). Involved in the regulation of cardiac precursor cell movements during gastrulation and heart morphogenesis (By similarity). Has an inhibitory effect on cytokine production in response to T-cell receptor/CD3 cross-linking; the oral intake of apelin in the colostrum and the milk might therefore modulate immune responses in neonates. Plays a role in early coronary blood vessels formation (By similarity). Mediates myocardial contractility in an ERK1/2-dependent manner (By similarity). May also have a role in the central control of body fluid homeostasis by influencing vasopressin release and drinking behavior (By similarity).</text>
</comment>
<comment type="subcellular location">
    <subcellularLocation>
        <location evidence="7 8">Secreted</location>
    </subcellularLocation>
    <subcellularLocation>
        <location evidence="7">Secreted</location>
        <location evidence="7">Extracellular space</location>
    </subcellularLocation>
    <text evidence="7">Abundantly secreted in the colostrum (PubMed:10525157). Lower level in milk (PubMed:10525157). Decreases rapidly within several days after parturition in milk, but is still detectable even in commercial milk (PubMed:10525157).</text>
</comment>
<comment type="PTM">
    <text evidence="8">At least 5 active peptides may be produced by proteolytic processing of the peptide precursor (PubMed:9792798).</text>
</comment>
<comment type="similarity">
    <text evidence="9">Belongs to the apelin family.</text>
</comment>
<proteinExistence type="evidence at protein level"/>
<sequence length="77" mass="8743">MNLRRCVQALLLLWLCLSAVCGGPLLQTSDGKEMEEGTIRYLVQPRGPRSGPGPWQGGRRKFRRQRPRLSHKGPMPF</sequence>
<name>APEL_BOVIN</name>